<dbReference type="EC" id="2.1.3.-" evidence="1"/>
<dbReference type="EMBL" id="CP000947">
    <property type="protein sequence ID" value="ACA32532.1"/>
    <property type="status" value="ALT_INIT"/>
    <property type="molecule type" value="Genomic_DNA"/>
</dbReference>
<dbReference type="RefSeq" id="WP_041605047.1">
    <property type="nucleotide sequence ID" value="NC_010519.1"/>
</dbReference>
<dbReference type="SMR" id="B0USU1"/>
<dbReference type="STRING" id="228400.HSM_0858"/>
<dbReference type="GeneID" id="31487152"/>
<dbReference type="KEGG" id="hsm:HSM_0858"/>
<dbReference type="HOGENOM" id="CLU_078475_0_0_6"/>
<dbReference type="GO" id="GO:0016743">
    <property type="term" value="F:carboxyl- or carbamoyltransferase activity"/>
    <property type="evidence" value="ECO:0007669"/>
    <property type="project" value="UniProtKB-UniRule"/>
</dbReference>
<dbReference type="GO" id="GO:1904047">
    <property type="term" value="F:S-adenosyl-L-methionine binding"/>
    <property type="evidence" value="ECO:0007669"/>
    <property type="project" value="UniProtKB-UniRule"/>
</dbReference>
<dbReference type="GO" id="GO:0002098">
    <property type="term" value="P:tRNA wobble uridine modification"/>
    <property type="evidence" value="ECO:0007669"/>
    <property type="project" value="InterPro"/>
</dbReference>
<dbReference type="CDD" id="cd02440">
    <property type="entry name" value="AdoMet_MTases"/>
    <property type="match status" value="1"/>
</dbReference>
<dbReference type="Gene3D" id="3.40.50.150">
    <property type="entry name" value="Vaccinia Virus protein VP39"/>
    <property type="match status" value="1"/>
</dbReference>
<dbReference type="HAMAP" id="MF_01589">
    <property type="entry name" value="Cx_SAM_synthase"/>
    <property type="match status" value="1"/>
</dbReference>
<dbReference type="InterPro" id="IPR005271">
    <property type="entry name" value="CmoA"/>
</dbReference>
<dbReference type="InterPro" id="IPR041698">
    <property type="entry name" value="Methyltransf_25"/>
</dbReference>
<dbReference type="InterPro" id="IPR029063">
    <property type="entry name" value="SAM-dependent_MTases_sf"/>
</dbReference>
<dbReference type="NCBIfam" id="TIGR00740">
    <property type="entry name" value="carboxy-S-adenosyl-L-methionine synthase CmoA"/>
    <property type="match status" value="1"/>
</dbReference>
<dbReference type="NCBIfam" id="NF011995">
    <property type="entry name" value="PRK15451.1"/>
    <property type="match status" value="1"/>
</dbReference>
<dbReference type="PANTHER" id="PTHR43861:SF2">
    <property type="entry name" value="CARBOXY-S-ADENOSYL-L-METHIONINE SYNTHASE"/>
    <property type="match status" value="1"/>
</dbReference>
<dbReference type="PANTHER" id="PTHR43861">
    <property type="entry name" value="TRANS-ACONITATE 2-METHYLTRANSFERASE-RELATED"/>
    <property type="match status" value="1"/>
</dbReference>
<dbReference type="Pfam" id="PF13649">
    <property type="entry name" value="Methyltransf_25"/>
    <property type="match status" value="1"/>
</dbReference>
<dbReference type="PIRSF" id="PIRSF006325">
    <property type="entry name" value="MeTrfase_bac"/>
    <property type="match status" value="1"/>
</dbReference>
<dbReference type="SUPFAM" id="SSF53335">
    <property type="entry name" value="S-adenosyl-L-methionine-dependent methyltransferases"/>
    <property type="match status" value="1"/>
</dbReference>
<sequence>MNKDCIFAAPIEKLGDFTFDENVAEVFPDMIQRSVPGYSNIITAIGMFAERFVTANSLVYDLGCSRGAATLSARRHITQPNVKIIGVDNSLPMVERCRQHINAYQSDIPVEILCDDIRNIKIENASMVILNFTLQFVPQQDRQLLLEKIYQGLNPNGGLVLSEKFRFENKKMDDLLIDLHHQFKRANGYSELEVSQKRTALENVMRTDSIETHKERLKSAGFSQIELWFQCFNFGSMVAIK</sequence>
<organism>
    <name type="scientific">Histophilus somni (strain 2336)</name>
    <name type="common">Haemophilus somnus</name>
    <dbReference type="NCBI Taxonomy" id="228400"/>
    <lineage>
        <taxon>Bacteria</taxon>
        <taxon>Pseudomonadati</taxon>
        <taxon>Pseudomonadota</taxon>
        <taxon>Gammaproteobacteria</taxon>
        <taxon>Pasteurellales</taxon>
        <taxon>Pasteurellaceae</taxon>
        <taxon>Histophilus</taxon>
    </lineage>
</organism>
<comment type="function">
    <text evidence="1">Catalyzes the conversion of S-adenosyl-L-methionine (SAM) to carboxy-S-adenosyl-L-methionine (Cx-SAM).</text>
</comment>
<comment type="catalytic activity">
    <reaction evidence="1">
        <text>prephenate + S-adenosyl-L-methionine = carboxy-S-adenosyl-L-methionine + 3-phenylpyruvate + H2O</text>
        <dbReference type="Rhea" id="RHEA:51692"/>
        <dbReference type="ChEBI" id="CHEBI:15377"/>
        <dbReference type="ChEBI" id="CHEBI:18005"/>
        <dbReference type="ChEBI" id="CHEBI:29934"/>
        <dbReference type="ChEBI" id="CHEBI:59789"/>
        <dbReference type="ChEBI" id="CHEBI:134278"/>
    </reaction>
</comment>
<comment type="subunit">
    <text evidence="1">Homodimer.</text>
</comment>
<comment type="similarity">
    <text evidence="1">Belongs to the class I-like SAM-binding methyltransferase superfamily. Cx-SAM synthase family.</text>
</comment>
<comment type="sequence caution" evidence="2">
    <conflict type="erroneous initiation">
        <sequence resource="EMBL-CDS" id="ACA32532"/>
    </conflict>
</comment>
<reference key="1">
    <citation type="submission" date="2008-02" db="EMBL/GenBank/DDBJ databases">
        <title>Complete sequence of Haemophilus somnus 2336.</title>
        <authorList>
            <consortium name="US DOE Joint Genome Institute"/>
            <person name="Siddaramappa S."/>
            <person name="Duncan A.J."/>
            <person name="Challacombe J.F."/>
            <person name="Rainey D."/>
            <person name="Gillaspy A.F."/>
            <person name="Carson M."/>
            <person name="Gipson J."/>
            <person name="Gipson M."/>
            <person name="Bruce D."/>
            <person name="Detter J.C."/>
            <person name="Han C.S."/>
            <person name="Land M."/>
            <person name="Tapia R."/>
            <person name="Thompson L.S."/>
            <person name="Orvis J."/>
            <person name="Zaitshik J."/>
            <person name="Barnes G."/>
            <person name="Brettin T.S."/>
            <person name="Dyer D.W."/>
            <person name="Inzana T.J."/>
        </authorList>
    </citation>
    <scope>NUCLEOTIDE SEQUENCE [LARGE SCALE GENOMIC DNA]</scope>
    <source>
        <strain>2336</strain>
    </source>
</reference>
<accession>B0USU1</accession>
<protein>
    <recommendedName>
        <fullName evidence="1">Carboxy-S-adenosyl-L-methionine synthase</fullName>
        <shortName evidence="1">Cx-SAM synthase</shortName>
        <ecNumber evidence="1">2.1.3.-</ecNumber>
    </recommendedName>
</protein>
<evidence type="ECO:0000255" key="1">
    <source>
        <dbReference type="HAMAP-Rule" id="MF_01589"/>
    </source>
</evidence>
<evidence type="ECO:0000305" key="2"/>
<proteinExistence type="inferred from homology"/>
<name>CMOA_HISS2</name>
<feature type="chain" id="PRO_0000381960" description="Carboxy-S-adenosyl-L-methionine synthase">
    <location>
        <begin position="1"/>
        <end position="241"/>
    </location>
</feature>
<feature type="binding site" evidence="1">
    <location>
        <position position="38"/>
    </location>
    <ligand>
        <name>S-adenosyl-L-methionine</name>
        <dbReference type="ChEBI" id="CHEBI:59789"/>
    </ligand>
</feature>
<feature type="binding site" evidence="1">
    <location>
        <begin position="63"/>
        <end position="65"/>
    </location>
    <ligand>
        <name>S-adenosyl-L-methionine</name>
        <dbReference type="ChEBI" id="CHEBI:59789"/>
    </ligand>
</feature>
<feature type="binding site" evidence="1">
    <location>
        <begin position="88"/>
        <end position="89"/>
    </location>
    <ligand>
        <name>S-adenosyl-L-methionine</name>
        <dbReference type="ChEBI" id="CHEBI:59789"/>
    </ligand>
</feature>
<feature type="binding site" evidence="1">
    <location>
        <begin position="116"/>
        <end position="117"/>
    </location>
    <ligand>
        <name>S-adenosyl-L-methionine</name>
        <dbReference type="ChEBI" id="CHEBI:59789"/>
    </ligand>
</feature>
<feature type="binding site" evidence="1">
    <location>
        <position position="131"/>
    </location>
    <ligand>
        <name>S-adenosyl-L-methionine</name>
        <dbReference type="ChEBI" id="CHEBI:59789"/>
    </ligand>
</feature>
<feature type="binding site" evidence="1">
    <location>
        <position position="198"/>
    </location>
    <ligand>
        <name>S-adenosyl-L-methionine</name>
        <dbReference type="ChEBI" id="CHEBI:59789"/>
    </ligand>
</feature>
<keyword id="KW-0949">S-adenosyl-L-methionine</keyword>
<keyword id="KW-0808">Transferase</keyword>
<gene>
    <name evidence="1" type="primary">cmoA</name>
    <name type="ordered locus">HSM_0858</name>
</gene>